<protein>
    <recommendedName>
        <fullName evidence="1">ATP-dependent 6-phosphofructokinase</fullName>
        <shortName evidence="1">ATP-PFK</shortName>
        <shortName evidence="1">Phosphofructokinase</shortName>
        <ecNumber evidence="1">2.7.1.11</ecNumber>
    </recommendedName>
    <alternativeName>
        <fullName evidence="1">Phosphohexokinase</fullName>
    </alternativeName>
</protein>
<comment type="function">
    <text evidence="1">Catalyzes the phosphorylation of D-fructose 6-phosphate to fructose 1,6-bisphosphate by ATP, the first committing step of glycolysis.</text>
</comment>
<comment type="catalytic activity">
    <reaction evidence="1">
        <text>beta-D-fructose 6-phosphate + ATP = beta-D-fructose 1,6-bisphosphate + ADP + H(+)</text>
        <dbReference type="Rhea" id="RHEA:16109"/>
        <dbReference type="ChEBI" id="CHEBI:15378"/>
        <dbReference type="ChEBI" id="CHEBI:30616"/>
        <dbReference type="ChEBI" id="CHEBI:32966"/>
        <dbReference type="ChEBI" id="CHEBI:57634"/>
        <dbReference type="ChEBI" id="CHEBI:456216"/>
        <dbReference type="EC" id="2.7.1.11"/>
    </reaction>
</comment>
<comment type="cofactor">
    <cofactor evidence="1">
        <name>Mg(2+)</name>
        <dbReference type="ChEBI" id="CHEBI:18420"/>
    </cofactor>
</comment>
<comment type="activity regulation">
    <text evidence="1">Allosterically activated by ADP and other diphosphonucleosides, and allosterically inhibited by phosphoenolpyruvate.</text>
</comment>
<comment type="pathway">
    <text evidence="1">Carbohydrate degradation; glycolysis; D-glyceraldehyde 3-phosphate and glycerone phosphate from D-glucose: step 3/4.</text>
</comment>
<comment type="subunit">
    <text evidence="1">Homotetramer.</text>
</comment>
<comment type="subcellular location">
    <subcellularLocation>
        <location evidence="1">Cytoplasm</location>
    </subcellularLocation>
</comment>
<comment type="similarity">
    <text evidence="1">Belongs to the phosphofructokinase type A (PFKA) family. ATP-dependent PFK group I subfamily. Prokaryotic clade 'B1' sub-subfamily.</text>
</comment>
<accession>B8D7J8</accession>
<feature type="chain" id="PRO_1000192366" description="ATP-dependent 6-phosphofructokinase">
    <location>
        <begin position="1"/>
        <end position="320"/>
    </location>
</feature>
<feature type="active site" description="Proton acceptor" evidence="1">
    <location>
        <position position="128"/>
    </location>
</feature>
<feature type="binding site" evidence="1">
    <location>
        <position position="12"/>
    </location>
    <ligand>
        <name>ATP</name>
        <dbReference type="ChEBI" id="CHEBI:30616"/>
    </ligand>
</feature>
<feature type="binding site" evidence="1">
    <location>
        <begin position="22"/>
        <end position="26"/>
    </location>
    <ligand>
        <name>ADP</name>
        <dbReference type="ChEBI" id="CHEBI:456216"/>
        <note>allosteric activator; ligand shared between dimeric partners</note>
    </ligand>
</feature>
<feature type="binding site" evidence="1">
    <location>
        <begin position="55"/>
        <end position="60"/>
    </location>
    <ligand>
        <name>ADP</name>
        <dbReference type="ChEBI" id="CHEBI:456216"/>
        <note>allosteric activator; ligand shared between dimeric partners</note>
    </ligand>
</feature>
<feature type="binding site" evidence="1">
    <location>
        <begin position="73"/>
        <end position="74"/>
    </location>
    <ligand>
        <name>ATP</name>
        <dbReference type="ChEBI" id="CHEBI:30616"/>
    </ligand>
</feature>
<feature type="binding site" evidence="1">
    <location>
        <begin position="103"/>
        <end position="106"/>
    </location>
    <ligand>
        <name>ATP</name>
        <dbReference type="ChEBI" id="CHEBI:30616"/>
    </ligand>
</feature>
<feature type="binding site" evidence="1">
    <location>
        <position position="104"/>
    </location>
    <ligand>
        <name>Mg(2+)</name>
        <dbReference type="ChEBI" id="CHEBI:18420"/>
        <note>catalytic</note>
    </ligand>
</feature>
<feature type="binding site" description="in other chain" evidence="1">
    <location>
        <begin position="126"/>
        <end position="128"/>
    </location>
    <ligand>
        <name>substrate</name>
        <note>ligand shared between dimeric partners</note>
    </ligand>
</feature>
<feature type="binding site" description="in other chain" evidence="1">
    <location>
        <position position="155"/>
    </location>
    <ligand>
        <name>ADP</name>
        <dbReference type="ChEBI" id="CHEBI:456216"/>
        <note>allosteric activator; ligand shared between dimeric partners</note>
    </ligand>
</feature>
<feature type="binding site" evidence="1">
    <location>
        <position position="163"/>
    </location>
    <ligand>
        <name>substrate</name>
        <note>ligand shared between dimeric partners</note>
    </ligand>
</feature>
<feature type="binding site" description="in other chain" evidence="1">
    <location>
        <begin position="170"/>
        <end position="172"/>
    </location>
    <ligand>
        <name>substrate</name>
        <note>ligand shared between dimeric partners</note>
    </ligand>
</feature>
<feature type="binding site" description="in other chain" evidence="1">
    <location>
        <begin position="186"/>
        <end position="188"/>
    </location>
    <ligand>
        <name>ADP</name>
        <dbReference type="ChEBI" id="CHEBI:456216"/>
        <note>allosteric activator; ligand shared between dimeric partners</note>
    </ligand>
</feature>
<feature type="binding site" description="in other chain" evidence="1">
    <location>
        <position position="212"/>
    </location>
    <ligand>
        <name>ADP</name>
        <dbReference type="ChEBI" id="CHEBI:456216"/>
        <note>allosteric activator; ligand shared between dimeric partners</note>
    </ligand>
</feature>
<feature type="binding site" description="in other chain" evidence="1">
    <location>
        <begin position="214"/>
        <end position="216"/>
    </location>
    <ligand>
        <name>ADP</name>
        <dbReference type="ChEBI" id="CHEBI:456216"/>
        <note>allosteric activator; ligand shared between dimeric partners</note>
    </ligand>
</feature>
<feature type="binding site" description="in other chain" evidence="1">
    <location>
        <position position="223"/>
    </location>
    <ligand>
        <name>substrate</name>
        <note>ligand shared between dimeric partners</note>
    </ligand>
</feature>
<feature type="binding site" evidence="1">
    <location>
        <position position="244"/>
    </location>
    <ligand>
        <name>substrate</name>
        <note>ligand shared between dimeric partners</note>
    </ligand>
</feature>
<feature type="binding site" description="in other chain" evidence="1">
    <location>
        <begin position="250"/>
        <end position="253"/>
    </location>
    <ligand>
        <name>substrate</name>
        <note>ligand shared between dimeric partners</note>
    </ligand>
</feature>
<reference key="1">
    <citation type="journal article" date="2009" name="Science">
        <title>The dynamics and time scale of ongoing genomic erosion in symbiotic bacteria.</title>
        <authorList>
            <person name="Moran N.A."/>
            <person name="McLaughlin H.J."/>
            <person name="Sorek R."/>
        </authorList>
    </citation>
    <scope>NUCLEOTIDE SEQUENCE [LARGE SCALE GENOMIC DNA]</scope>
    <source>
        <strain>Tuc7</strain>
    </source>
</reference>
<organism>
    <name type="scientific">Buchnera aphidicola subsp. Acyrthosiphon pisum (strain Tuc7)</name>
    <dbReference type="NCBI Taxonomy" id="561501"/>
    <lineage>
        <taxon>Bacteria</taxon>
        <taxon>Pseudomonadati</taxon>
        <taxon>Pseudomonadota</taxon>
        <taxon>Gammaproteobacteria</taxon>
        <taxon>Enterobacterales</taxon>
        <taxon>Erwiniaceae</taxon>
        <taxon>Buchnera</taxon>
    </lineage>
</organism>
<dbReference type="EC" id="2.7.1.11" evidence="1"/>
<dbReference type="EMBL" id="CP001158">
    <property type="protein sequence ID" value="ACL30113.1"/>
    <property type="molecule type" value="Genomic_DNA"/>
</dbReference>
<dbReference type="RefSeq" id="WP_009874258.1">
    <property type="nucleotide sequence ID" value="NC_011834.1"/>
</dbReference>
<dbReference type="SMR" id="B8D7J8"/>
<dbReference type="KEGG" id="bau:BUAPTUC7_300"/>
<dbReference type="HOGENOM" id="CLU_020655_0_1_6"/>
<dbReference type="UniPathway" id="UPA00109">
    <property type="reaction ID" value="UER00182"/>
</dbReference>
<dbReference type="GO" id="GO:0005945">
    <property type="term" value="C:6-phosphofructokinase complex"/>
    <property type="evidence" value="ECO:0007669"/>
    <property type="project" value="TreeGrafter"/>
</dbReference>
<dbReference type="GO" id="GO:0003872">
    <property type="term" value="F:6-phosphofructokinase activity"/>
    <property type="evidence" value="ECO:0007669"/>
    <property type="project" value="UniProtKB-UniRule"/>
</dbReference>
<dbReference type="GO" id="GO:0016208">
    <property type="term" value="F:AMP binding"/>
    <property type="evidence" value="ECO:0007669"/>
    <property type="project" value="TreeGrafter"/>
</dbReference>
<dbReference type="GO" id="GO:0005524">
    <property type="term" value="F:ATP binding"/>
    <property type="evidence" value="ECO:0007669"/>
    <property type="project" value="UniProtKB-KW"/>
</dbReference>
<dbReference type="GO" id="GO:0070095">
    <property type="term" value="F:fructose-6-phosphate binding"/>
    <property type="evidence" value="ECO:0007669"/>
    <property type="project" value="TreeGrafter"/>
</dbReference>
<dbReference type="GO" id="GO:0042802">
    <property type="term" value="F:identical protein binding"/>
    <property type="evidence" value="ECO:0007669"/>
    <property type="project" value="TreeGrafter"/>
</dbReference>
<dbReference type="GO" id="GO:0046872">
    <property type="term" value="F:metal ion binding"/>
    <property type="evidence" value="ECO:0007669"/>
    <property type="project" value="UniProtKB-KW"/>
</dbReference>
<dbReference type="GO" id="GO:0048029">
    <property type="term" value="F:monosaccharide binding"/>
    <property type="evidence" value="ECO:0007669"/>
    <property type="project" value="TreeGrafter"/>
</dbReference>
<dbReference type="GO" id="GO:0061621">
    <property type="term" value="P:canonical glycolysis"/>
    <property type="evidence" value="ECO:0007669"/>
    <property type="project" value="TreeGrafter"/>
</dbReference>
<dbReference type="GO" id="GO:0030388">
    <property type="term" value="P:fructose 1,6-bisphosphate metabolic process"/>
    <property type="evidence" value="ECO:0007669"/>
    <property type="project" value="TreeGrafter"/>
</dbReference>
<dbReference type="GO" id="GO:0006002">
    <property type="term" value="P:fructose 6-phosphate metabolic process"/>
    <property type="evidence" value="ECO:0007669"/>
    <property type="project" value="InterPro"/>
</dbReference>
<dbReference type="CDD" id="cd00763">
    <property type="entry name" value="Bacterial_PFK"/>
    <property type="match status" value="1"/>
</dbReference>
<dbReference type="FunFam" id="3.40.50.450:FF:000001">
    <property type="entry name" value="ATP-dependent 6-phosphofructokinase"/>
    <property type="match status" value="1"/>
</dbReference>
<dbReference type="FunFam" id="3.40.50.460:FF:000002">
    <property type="entry name" value="ATP-dependent 6-phosphofructokinase"/>
    <property type="match status" value="1"/>
</dbReference>
<dbReference type="Gene3D" id="3.40.50.450">
    <property type="match status" value="1"/>
</dbReference>
<dbReference type="Gene3D" id="3.40.50.460">
    <property type="entry name" value="Phosphofructokinase domain"/>
    <property type="match status" value="1"/>
</dbReference>
<dbReference type="HAMAP" id="MF_00339">
    <property type="entry name" value="Phosphofructokinase_I_B1"/>
    <property type="match status" value="1"/>
</dbReference>
<dbReference type="InterPro" id="IPR022953">
    <property type="entry name" value="ATP_PFK"/>
</dbReference>
<dbReference type="InterPro" id="IPR012003">
    <property type="entry name" value="ATP_PFK_prok-type"/>
</dbReference>
<dbReference type="InterPro" id="IPR012828">
    <property type="entry name" value="PFKA_ATP_prok"/>
</dbReference>
<dbReference type="InterPro" id="IPR015912">
    <property type="entry name" value="Phosphofructokinase_CS"/>
</dbReference>
<dbReference type="InterPro" id="IPR000023">
    <property type="entry name" value="Phosphofructokinase_dom"/>
</dbReference>
<dbReference type="InterPro" id="IPR035966">
    <property type="entry name" value="PKF_sf"/>
</dbReference>
<dbReference type="NCBIfam" id="TIGR02482">
    <property type="entry name" value="PFKA_ATP"/>
    <property type="match status" value="1"/>
</dbReference>
<dbReference type="NCBIfam" id="NF002872">
    <property type="entry name" value="PRK03202.1"/>
    <property type="match status" value="1"/>
</dbReference>
<dbReference type="PANTHER" id="PTHR13697:SF4">
    <property type="entry name" value="ATP-DEPENDENT 6-PHOSPHOFRUCTOKINASE"/>
    <property type="match status" value="1"/>
</dbReference>
<dbReference type="PANTHER" id="PTHR13697">
    <property type="entry name" value="PHOSPHOFRUCTOKINASE"/>
    <property type="match status" value="1"/>
</dbReference>
<dbReference type="Pfam" id="PF00365">
    <property type="entry name" value="PFK"/>
    <property type="match status" value="1"/>
</dbReference>
<dbReference type="PIRSF" id="PIRSF000532">
    <property type="entry name" value="ATP_PFK_prok"/>
    <property type="match status" value="1"/>
</dbReference>
<dbReference type="PRINTS" id="PR00476">
    <property type="entry name" value="PHFRCTKINASE"/>
</dbReference>
<dbReference type="SUPFAM" id="SSF53784">
    <property type="entry name" value="Phosphofructokinase"/>
    <property type="match status" value="1"/>
</dbReference>
<dbReference type="PROSITE" id="PS00433">
    <property type="entry name" value="PHOSPHOFRUCTOKINASE"/>
    <property type="match status" value="1"/>
</dbReference>
<keyword id="KW-0021">Allosteric enzyme</keyword>
<keyword id="KW-0067">ATP-binding</keyword>
<keyword id="KW-0963">Cytoplasm</keyword>
<keyword id="KW-0324">Glycolysis</keyword>
<keyword id="KW-0418">Kinase</keyword>
<keyword id="KW-0460">Magnesium</keyword>
<keyword id="KW-0479">Metal-binding</keyword>
<keyword id="KW-0547">Nucleotide-binding</keyword>
<keyword id="KW-0808">Transferase</keyword>
<gene>
    <name evidence="1" type="primary">pfkA</name>
    <name type="ordered locus">BUAPTUC7_300</name>
</gene>
<proteinExistence type="inferred from homology"/>
<evidence type="ECO:0000255" key="1">
    <source>
        <dbReference type="HAMAP-Rule" id="MF_00339"/>
    </source>
</evidence>
<sequence length="320" mass="35278">MIKKIGVLTSGGDAPGMNAAIRGVVRTALSERLEVFGIYDGYLGLYENRMVQLDRYSVSDMINRGGTFLGSARFASFYQDKIRSIAVQNIKKRKIDALVVIGGDGSYIGAQKLTEMGIPCISIPGTIDNDVSGTDYTIGYFTALQTVVEAIDRLRDTSSSHQRISIVEVMGRHCGDLTLAAAIAGGCEFIVLPEIDYKKEDLVIEIQAGIAKGKKHAIVAITEYICDVEELAQYIEKKTNRETRATILGHIQRGGAPVVYDRILASRMGAYSVELLIKGYQGKCVGIQNEKMVFNDIKNALKNMKRTFKKDWLITAKKLY</sequence>
<name>PFKA_BUCAT</name>